<accession>P55674</accession>
<proteinExistence type="inferred from homology"/>
<name>NIFN_SINFN</name>
<keyword id="KW-0479">Metal-binding</keyword>
<keyword id="KW-0535">Nitrogen fixation</keyword>
<keyword id="KW-0614">Plasmid</keyword>
<keyword id="KW-1185">Reference proteome</keyword>
<dbReference type="EMBL" id="U00090">
    <property type="protein sequence ID" value="AAB91903.1"/>
    <property type="molecule type" value="Genomic_DNA"/>
</dbReference>
<dbReference type="RefSeq" id="NP_444116.1">
    <property type="nucleotide sequence ID" value="NC_000914.2"/>
</dbReference>
<dbReference type="RefSeq" id="WP_010875150.1">
    <property type="nucleotide sequence ID" value="NC_000914.2"/>
</dbReference>
<dbReference type="SMR" id="P55674"/>
<dbReference type="KEGG" id="rhi:NGR_a01090"/>
<dbReference type="PATRIC" id="fig|394.7.peg.93"/>
<dbReference type="eggNOG" id="COG2710">
    <property type="taxonomic scope" value="Bacteria"/>
</dbReference>
<dbReference type="HOGENOM" id="CLU_025876_2_0_5"/>
<dbReference type="OrthoDB" id="9800746at2"/>
<dbReference type="UniPathway" id="UPA00782"/>
<dbReference type="Proteomes" id="UP000001054">
    <property type="component" value="Plasmid pNGR234a"/>
</dbReference>
<dbReference type="GO" id="GO:0046872">
    <property type="term" value="F:metal ion binding"/>
    <property type="evidence" value="ECO:0007669"/>
    <property type="project" value="UniProtKB-KW"/>
</dbReference>
<dbReference type="GO" id="GO:0016163">
    <property type="term" value="F:nitrogenase activity"/>
    <property type="evidence" value="ECO:0007669"/>
    <property type="project" value="InterPro"/>
</dbReference>
<dbReference type="GO" id="GO:0009399">
    <property type="term" value="P:nitrogen fixation"/>
    <property type="evidence" value="ECO:0007669"/>
    <property type="project" value="UniProtKB-KW"/>
</dbReference>
<dbReference type="GO" id="GO:0065003">
    <property type="term" value="P:protein-containing complex assembly"/>
    <property type="evidence" value="ECO:0007669"/>
    <property type="project" value="InterPro"/>
</dbReference>
<dbReference type="CDD" id="cd01966">
    <property type="entry name" value="Nitrogenase_NifN_1"/>
    <property type="match status" value="1"/>
</dbReference>
<dbReference type="Gene3D" id="6.10.250.1090">
    <property type="match status" value="1"/>
</dbReference>
<dbReference type="Gene3D" id="3.40.50.1980">
    <property type="entry name" value="Nitrogenase molybdenum iron protein domain"/>
    <property type="match status" value="3"/>
</dbReference>
<dbReference type="InterPro" id="IPR050152">
    <property type="entry name" value="ChlB/BchB/BchZ"/>
</dbReference>
<dbReference type="InterPro" id="IPR000510">
    <property type="entry name" value="Nase/OxRdtase_comp1"/>
</dbReference>
<dbReference type="InterPro" id="IPR000318">
    <property type="entry name" value="Nase_comp1_CS"/>
</dbReference>
<dbReference type="InterPro" id="IPR005975">
    <property type="entry name" value="Nase_Mo-Fe_CF"/>
</dbReference>
<dbReference type="NCBIfam" id="TIGR01285">
    <property type="entry name" value="nifN"/>
    <property type="match status" value="1"/>
</dbReference>
<dbReference type="PANTHER" id="PTHR33712">
    <property type="entry name" value="LIGHT-INDEPENDENT PROTOCHLOROPHYLLIDE REDUCTASE SUBUNIT B"/>
    <property type="match status" value="1"/>
</dbReference>
<dbReference type="PANTHER" id="PTHR33712:SF7">
    <property type="entry name" value="LIGHT-INDEPENDENT PROTOCHLOROPHYLLIDE REDUCTASE SUBUNIT B"/>
    <property type="match status" value="1"/>
</dbReference>
<dbReference type="Pfam" id="PF00148">
    <property type="entry name" value="Oxidored_nitro"/>
    <property type="match status" value="1"/>
</dbReference>
<dbReference type="SUPFAM" id="SSF53807">
    <property type="entry name" value="Helical backbone' metal receptor"/>
    <property type="match status" value="1"/>
</dbReference>
<dbReference type="PROSITE" id="PS00699">
    <property type="entry name" value="NITROGENASE_1_1"/>
    <property type="match status" value="1"/>
</dbReference>
<comment type="function">
    <text>This protein may play a role in the biosynthesis of the prosthetic group of nitrogenase (FeMo cofactor).</text>
</comment>
<comment type="pathway">
    <text>Cofactor biosynthesis; Fe-Mo cofactor biosynthesis.</text>
</comment>
<comment type="similarity">
    <text evidence="2">Belongs to the NifD/NifK/NifE/NifN family.</text>
</comment>
<protein>
    <recommendedName>
        <fullName>Nitrogenase iron-molybdenum cofactor biosynthesis protein NifN</fullName>
    </recommendedName>
</protein>
<gene>
    <name type="primary">nifN</name>
    <name type="ordered locus">NGR_a01090</name>
    <name type="ORF">y4vO</name>
</gene>
<reference key="1">
    <citation type="journal article" date="1997" name="Nature">
        <title>Molecular basis of symbiosis between Rhizobium and legumes.</title>
        <authorList>
            <person name="Freiberg C.A."/>
            <person name="Fellay R."/>
            <person name="Bairoch A."/>
            <person name="Broughton W.J."/>
            <person name="Rosenthal A."/>
            <person name="Perret X."/>
        </authorList>
    </citation>
    <scope>NUCLEOTIDE SEQUENCE [LARGE SCALE GENOMIC DNA]</scope>
    <source>
        <strain>NBRC 101917 / NGR234</strain>
    </source>
</reference>
<reference key="2">
    <citation type="journal article" date="2009" name="Appl. Environ. Microbiol.">
        <title>Rhizobium sp. strain NGR234 possesses a remarkable number of secretion systems.</title>
        <authorList>
            <person name="Schmeisser C."/>
            <person name="Liesegang H."/>
            <person name="Krysciak D."/>
            <person name="Bakkou N."/>
            <person name="Le Quere A."/>
            <person name="Wollherr A."/>
            <person name="Heinemeyer I."/>
            <person name="Morgenstern B."/>
            <person name="Pommerening-Roeser A."/>
            <person name="Flores M."/>
            <person name="Palacios R."/>
            <person name="Brenner S."/>
            <person name="Gottschalk G."/>
            <person name="Schmitz R.A."/>
            <person name="Broughton W.J."/>
            <person name="Perret X."/>
            <person name="Strittmatter A.W."/>
            <person name="Streit W.R."/>
        </authorList>
    </citation>
    <scope>NUCLEOTIDE SEQUENCE [LARGE SCALE GENOMIC DNA]</scope>
    <source>
        <strain>NBRC 101917 / NGR234</strain>
    </source>
</reference>
<feature type="chain" id="PRO_0000153132" description="Nitrogenase iron-molybdenum cofactor biosynthesis protein NifN">
    <location>
        <begin position="1"/>
        <end position="469"/>
    </location>
</feature>
<feature type="binding site" evidence="1">
    <location>
        <position position="44"/>
    </location>
    <ligand>
        <name>[7Fe-Mo-9S-C-homocitryl] cluster</name>
        <dbReference type="ChEBI" id="CHEBI:30409"/>
        <note>cofactor</note>
    </ligand>
</feature>
<sequence length="469" mass="51114">MVHIHRQSKSATVNPLKSSQPLGAALAFLGVDGAIPLFHGSQGCTSFALVLCVRHFKETIPLQTTAMDELATVLGGAAHLEEAILNLKKRANPRLIGICTTALVETRSEDFARQIANIKMTHAEELAGTEVVLANTPDFDGALEEGWARAVAAMIQQITLRRQQAPRSRKATLIERITKPSEQPWKQQKVAILPGWHLTVGDIEQLREMVEGFGLRPVIVPDVSGSLDGTVPDRWMPTAYGGTSIEDIQELGRAVRCIAIGEHMRRPAELLQTLTGVPYVLVQSLTGLKNVDQFVSLLSEISCVPAPAKIHRHRSQLQDALLDGHFHFAGKKIAIATEPDQLYQFATFFTGLGAEIISAVTTTGESEIIEKVPAEKVQIGDLGDLEDLAGGADLLVTHSHGRQAAERLGIPLLRIGFPIFDRLGSQHKLTVLYRGTRDLIFEAANIIQANQPAPSLEQIDAMRKRRNAG</sequence>
<organism>
    <name type="scientific">Sinorhizobium fredii (strain NBRC 101917 / NGR234)</name>
    <dbReference type="NCBI Taxonomy" id="394"/>
    <lineage>
        <taxon>Bacteria</taxon>
        <taxon>Pseudomonadati</taxon>
        <taxon>Pseudomonadota</taxon>
        <taxon>Alphaproteobacteria</taxon>
        <taxon>Hyphomicrobiales</taxon>
        <taxon>Rhizobiaceae</taxon>
        <taxon>Sinorhizobium/Ensifer group</taxon>
        <taxon>Sinorhizobium</taxon>
    </lineage>
</organism>
<geneLocation type="plasmid">
    <name>sym pNGR234a</name>
</geneLocation>
<evidence type="ECO:0000255" key="1"/>
<evidence type="ECO:0000305" key="2"/>